<comment type="function">
    <text evidence="1">Catalyzes the first step of the methylation pathway of phosphatidylcholine biosynthesis, the SAM-dependent methylation of phosphatidylethanolamine (PE) to phosphatidylmonomethylethanolamine (PMME).</text>
</comment>
<comment type="catalytic activity">
    <reaction evidence="1">
        <text>a 1,2-diacyl-sn-glycero-3-phosphoethanolamine + S-adenosyl-L-methionine = a 1,2-diacyl-sn-glycero-3-phospho-N-methylethanolamine + S-adenosyl-L-homocysteine + H(+)</text>
        <dbReference type="Rhea" id="RHEA:11164"/>
        <dbReference type="ChEBI" id="CHEBI:15378"/>
        <dbReference type="ChEBI" id="CHEBI:57856"/>
        <dbReference type="ChEBI" id="CHEBI:59789"/>
        <dbReference type="ChEBI" id="CHEBI:64573"/>
        <dbReference type="ChEBI" id="CHEBI:64612"/>
        <dbReference type="EC" id="2.1.1.17"/>
    </reaction>
</comment>
<comment type="pathway">
    <text evidence="1">Phospholipid metabolism; phosphatidylcholine biosynthesis.</text>
</comment>
<comment type="subcellular location">
    <subcellularLocation>
        <location evidence="1">Endoplasmic reticulum membrane</location>
        <topology evidence="1">Multi-pass membrane protein</topology>
    </subcellularLocation>
</comment>
<comment type="similarity">
    <text evidence="1">Belongs to the class VI-like SAM-binding methyltransferase superfamily. CHO2 family.</text>
</comment>
<feature type="chain" id="PRO_0000405911" description="Phosphatidylethanolamine N-methyltransferase">
    <location>
        <begin position="1"/>
        <end position="896"/>
    </location>
</feature>
<feature type="topological domain" description="Lumenal" evidence="1">
    <location>
        <begin position="1"/>
        <end position="85"/>
    </location>
</feature>
<feature type="transmembrane region" description="Helical" evidence="1">
    <location>
        <begin position="86"/>
        <end position="106"/>
    </location>
</feature>
<feature type="topological domain" description="Cytoplasmic" evidence="1">
    <location>
        <begin position="107"/>
        <end position="112"/>
    </location>
</feature>
<feature type="transmembrane region" description="Helical" evidence="1">
    <location>
        <begin position="113"/>
        <end position="133"/>
    </location>
</feature>
<feature type="topological domain" description="Lumenal" evidence="1">
    <location>
        <begin position="134"/>
        <end position="198"/>
    </location>
</feature>
<feature type="transmembrane region" description="Helical" evidence="1">
    <location>
        <begin position="199"/>
        <end position="219"/>
    </location>
</feature>
<feature type="topological domain" description="Cytoplasmic" evidence="1">
    <location>
        <begin position="220"/>
        <end position="225"/>
    </location>
</feature>
<feature type="transmembrane region" description="Helical" evidence="1">
    <location>
        <begin position="226"/>
        <end position="246"/>
    </location>
</feature>
<feature type="topological domain" description="Lumenal" evidence="1">
    <location>
        <begin position="247"/>
        <end position="256"/>
    </location>
</feature>
<feature type="transmembrane region" description="Helical" evidence="1">
    <location>
        <begin position="257"/>
        <end position="277"/>
    </location>
</feature>
<feature type="topological domain" description="Cytoplasmic" evidence="1">
    <location>
        <begin position="278"/>
        <end position="279"/>
    </location>
</feature>
<feature type="transmembrane region" description="Helical" evidence="1">
    <location>
        <begin position="280"/>
        <end position="300"/>
    </location>
</feature>
<feature type="topological domain" description="Lumenal" evidence="1">
    <location>
        <begin position="301"/>
        <end position="304"/>
    </location>
</feature>
<feature type="transmembrane region" description="Helical" evidence="1">
    <location>
        <begin position="305"/>
        <end position="325"/>
    </location>
</feature>
<feature type="topological domain" description="Cytoplasmic" evidence="1">
    <location>
        <begin position="326"/>
        <end position="341"/>
    </location>
</feature>
<feature type="transmembrane region" description="Helical" evidence="1">
    <location>
        <begin position="342"/>
        <end position="362"/>
    </location>
</feature>
<feature type="topological domain" description="Lumenal" evidence="1">
    <location>
        <begin position="363"/>
        <end position="403"/>
    </location>
</feature>
<feature type="transmembrane region" description="Helical" evidence="1">
    <location>
        <begin position="404"/>
        <end position="424"/>
    </location>
</feature>
<feature type="topological domain" description="Cytoplasmic" evidence="1">
    <location>
        <begin position="425"/>
        <end position="427"/>
    </location>
</feature>
<feature type="transmembrane region" description="Helical" evidence="1">
    <location>
        <begin position="428"/>
        <end position="448"/>
    </location>
</feature>
<feature type="topological domain" description="Lumenal" evidence="1">
    <location>
        <begin position="449"/>
        <end position="481"/>
    </location>
</feature>
<feature type="transmembrane region" description="Helical" evidence="1">
    <location>
        <begin position="482"/>
        <end position="502"/>
    </location>
</feature>
<feature type="topological domain" description="Cytoplasmic" evidence="1">
    <location>
        <begin position="503"/>
        <end position="896"/>
    </location>
</feature>
<feature type="region of interest" description="Disordered" evidence="2">
    <location>
        <begin position="1"/>
        <end position="61"/>
    </location>
</feature>
<feature type="compositionally biased region" description="Basic and acidic residues" evidence="2">
    <location>
        <begin position="1"/>
        <end position="19"/>
    </location>
</feature>
<feature type="compositionally biased region" description="Basic and acidic residues" evidence="2">
    <location>
        <begin position="27"/>
        <end position="53"/>
    </location>
</feature>
<proteinExistence type="inferred from homology"/>
<gene>
    <name type="primary">cho2</name>
    <name type="ORF">PTRG_09202</name>
</gene>
<dbReference type="EC" id="2.1.1.17" evidence="1"/>
<dbReference type="EMBL" id="DS231624">
    <property type="protein sequence ID" value="EDU42253.1"/>
    <property type="molecule type" value="Genomic_DNA"/>
</dbReference>
<dbReference type="RefSeq" id="XP_001939534.1">
    <property type="nucleotide sequence ID" value="XM_001939499.1"/>
</dbReference>
<dbReference type="SMR" id="B2WFD4"/>
<dbReference type="FunCoup" id="B2WFD4">
    <property type="interactions" value="62"/>
</dbReference>
<dbReference type="STRING" id="426418.B2WFD4"/>
<dbReference type="EnsemblFungi" id="EDU42253">
    <property type="protein sequence ID" value="EDU42253"/>
    <property type="gene ID" value="PTRG_09202"/>
</dbReference>
<dbReference type="eggNOG" id="ENOG502QRGH">
    <property type="taxonomic scope" value="Eukaryota"/>
</dbReference>
<dbReference type="HOGENOM" id="CLU_005987_0_0_1"/>
<dbReference type="InParanoid" id="B2WFD4"/>
<dbReference type="OMA" id="RIWYSVG"/>
<dbReference type="OrthoDB" id="3952at28556"/>
<dbReference type="UniPathway" id="UPA00753"/>
<dbReference type="Proteomes" id="UP000001471">
    <property type="component" value="Unassembled WGS sequence"/>
</dbReference>
<dbReference type="GO" id="GO:0032541">
    <property type="term" value="C:cortical endoplasmic reticulum"/>
    <property type="evidence" value="ECO:0007669"/>
    <property type="project" value="EnsemblFungi"/>
</dbReference>
<dbReference type="GO" id="GO:0005789">
    <property type="term" value="C:endoplasmic reticulum membrane"/>
    <property type="evidence" value="ECO:0007669"/>
    <property type="project" value="UniProtKB-SubCell"/>
</dbReference>
<dbReference type="GO" id="GO:0097038">
    <property type="term" value="C:perinuclear endoplasmic reticulum"/>
    <property type="evidence" value="ECO:0007669"/>
    <property type="project" value="EnsemblFungi"/>
</dbReference>
<dbReference type="GO" id="GO:0004608">
    <property type="term" value="F:phosphatidylethanolamine N-methyltransferase activity"/>
    <property type="evidence" value="ECO:0007669"/>
    <property type="project" value="UniProtKB-UniRule"/>
</dbReference>
<dbReference type="GO" id="GO:0032259">
    <property type="term" value="P:methylation"/>
    <property type="evidence" value="ECO:0007669"/>
    <property type="project" value="UniProtKB-KW"/>
</dbReference>
<dbReference type="GO" id="GO:0006656">
    <property type="term" value="P:phosphatidylcholine biosynthetic process"/>
    <property type="evidence" value="ECO:0007669"/>
    <property type="project" value="UniProtKB-UniRule"/>
</dbReference>
<dbReference type="HAMAP" id="MF_03217">
    <property type="entry name" value="PEMT"/>
    <property type="match status" value="1"/>
</dbReference>
<dbReference type="InterPro" id="IPR007318">
    <property type="entry name" value="Phopholipid_MeTrfase"/>
</dbReference>
<dbReference type="InterPro" id="IPR016219">
    <property type="entry name" value="Phosphatid-EA_MeTrfase_fun"/>
</dbReference>
<dbReference type="PANTHER" id="PTHR32138">
    <property type="entry name" value="PHOSPHATIDYLETHANOLAMINE N-METHYLTRANSFERASE"/>
    <property type="match status" value="1"/>
</dbReference>
<dbReference type="PANTHER" id="PTHR32138:SF0">
    <property type="entry name" value="PHOSPHATIDYLETHANOLAMINE N-METHYLTRANSFERASE"/>
    <property type="match status" value="1"/>
</dbReference>
<dbReference type="Pfam" id="PF04191">
    <property type="entry name" value="PEMT"/>
    <property type="match status" value="2"/>
</dbReference>
<dbReference type="PIRSF" id="PIRSF000383">
    <property type="entry name" value="PEAMT"/>
    <property type="match status" value="1"/>
</dbReference>
<dbReference type="PROSITE" id="PS51598">
    <property type="entry name" value="SAM_CHO2"/>
    <property type="match status" value="1"/>
</dbReference>
<protein>
    <recommendedName>
        <fullName evidence="1">Phosphatidylethanolamine N-methyltransferase</fullName>
        <shortName evidence="1">PE methyltransferase</shortName>
        <shortName evidence="1">PEAMT</shortName>
        <shortName evidence="1">PEMT</shortName>
        <ecNumber evidence="1">2.1.1.17</ecNumber>
    </recommendedName>
</protein>
<name>CHO2_PYRTR</name>
<organism>
    <name type="scientific">Pyrenophora tritici-repentis (strain Pt-1C-BFP)</name>
    <name type="common">Wheat tan spot fungus</name>
    <name type="synonym">Drechslera tritici-repentis</name>
    <dbReference type="NCBI Taxonomy" id="426418"/>
    <lineage>
        <taxon>Eukaryota</taxon>
        <taxon>Fungi</taxon>
        <taxon>Dikarya</taxon>
        <taxon>Ascomycota</taxon>
        <taxon>Pezizomycotina</taxon>
        <taxon>Dothideomycetes</taxon>
        <taxon>Pleosporomycetidae</taxon>
        <taxon>Pleosporales</taxon>
        <taxon>Pleosporineae</taxon>
        <taxon>Pleosporaceae</taxon>
        <taxon>Pyrenophora</taxon>
    </lineage>
</organism>
<sequence length="896" mass="102284">MADVGDLKADGSQLRERPSAKPLHLNNSDDAKQKVLKLNDQEDKDHKNDESKKRTYGRTPDGTVFIVPQTHDMVSQLLSPSQPKNLSDIAVLAVLASLILTFYALPKSARVPIFAIIFLFWRAGYNAGIGWLLDGQSKHNRLVLWAKQSHIFEKPETGKNPNPALYKLLKRELETKIPKDYKFEEAPLEYNTWLVFRRVVDLILMCDFVSYCLFALACFNRPQESWFLWALRWTTGIILFLFNLWVKLDAHRVVKDFAWYWGDFFYLIDQSLTFDGVFEMAPHPMYSVGYAGYYGIALMMASYKVLAISIIAHAAQFAFLILVESRHIDKLYNPPPPRLKTFLFVNAFAWRLWYTLGLGYILDRQSKKKNWTKHFIKYGDTKEEAWRQWKSLYHLSMTMSHASFVALAWKMYSLPPDGLTGLTLFRHVLGAGMIALQVWTAMSIYESLGEFGWFCGDFFFDPPSKSLTYNGIYRFLNNPERVLGLAGVWGIAIITWSPAVFYVATTAHILNLAFLQFVEKPHVIKLYGENLREMSGVSKTVRQALPDPVRQWQSAADQYINTTVESIEAMLDRARSKFAGSVDTFVNDTTSLFKSYPARIPISRHHSEDLSGLNLKQYKLEIEGTTLPPAVEQQKNGGREGELARTPAIRTNDFKTLCLEYGAPIRVRWQAPLNHSKKDWIGLYMVTDNQSRKVTRISSNGRWVATNPDAFDSTRADDGILVSDKLLPANDNDEESTDCYTGEVEFHGDKLWWTTGVFEFRYHHGGRHHVMALSQAFEIRIPKFDETDVEVDDNGTIHRAVEETLLPIIQNCFDRDPEIAPSTSEEPFGSLVERDGKFARRVVFAVHQMFGIEFAPEVVQADGTVRNLAWRICNAKKVLAPYSMSATHGRNTPTMG</sequence>
<keyword id="KW-0256">Endoplasmic reticulum</keyword>
<keyword id="KW-0444">Lipid biosynthesis</keyword>
<keyword id="KW-0443">Lipid metabolism</keyword>
<keyword id="KW-0472">Membrane</keyword>
<keyword id="KW-0489">Methyltransferase</keyword>
<keyword id="KW-0594">Phospholipid biosynthesis</keyword>
<keyword id="KW-1208">Phospholipid metabolism</keyword>
<keyword id="KW-1185">Reference proteome</keyword>
<keyword id="KW-0949">S-adenosyl-L-methionine</keyword>
<keyword id="KW-0808">Transferase</keyword>
<keyword id="KW-0812">Transmembrane</keyword>
<keyword id="KW-1133">Transmembrane helix</keyword>
<reference key="1">
    <citation type="journal article" date="2013" name="G3 (Bethesda)">
        <title>Comparative genomics of a plant-pathogenic fungus, Pyrenophora tritici-repentis, reveals transduplication and the impact of repeat elements on pathogenicity and population divergence.</title>
        <authorList>
            <person name="Manning V.A."/>
            <person name="Pandelova I."/>
            <person name="Dhillon B."/>
            <person name="Wilhelm L.J."/>
            <person name="Goodwin S.B."/>
            <person name="Berlin A.M."/>
            <person name="Figueroa M."/>
            <person name="Freitag M."/>
            <person name="Hane J.K."/>
            <person name="Henrissat B."/>
            <person name="Holman W.H."/>
            <person name="Kodira C.D."/>
            <person name="Martin J."/>
            <person name="Oliver R.P."/>
            <person name="Robbertse B."/>
            <person name="Schackwitz W."/>
            <person name="Schwartz D.C."/>
            <person name="Spatafora J.W."/>
            <person name="Turgeon B.G."/>
            <person name="Yandava C."/>
            <person name="Young S."/>
            <person name="Zhou S."/>
            <person name="Zeng Q."/>
            <person name="Grigoriev I.V."/>
            <person name="Ma L.-J."/>
            <person name="Ciuffetti L.M."/>
        </authorList>
    </citation>
    <scope>NUCLEOTIDE SEQUENCE [LARGE SCALE GENOMIC DNA]</scope>
    <source>
        <strain>Pt-1C-BFP</strain>
    </source>
</reference>
<evidence type="ECO:0000255" key="1">
    <source>
        <dbReference type="HAMAP-Rule" id="MF_03217"/>
    </source>
</evidence>
<evidence type="ECO:0000256" key="2">
    <source>
        <dbReference type="SAM" id="MobiDB-lite"/>
    </source>
</evidence>
<accession>B2WFD4</accession>